<evidence type="ECO:0000255" key="1">
    <source>
        <dbReference type="HAMAP-Rule" id="MF_00531"/>
    </source>
</evidence>
<evidence type="ECO:0000305" key="2"/>
<geneLocation type="chloroplast"/>
<comment type="function">
    <text evidence="1">Protein S19 forms a complex with S13 that binds strongly to the 16S ribosomal RNA.</text>
</comment>
<comment type="subcellular location">
    <subcellularLocation>
        <location>Plastid</location>
        <location>Chloroplast</location>
    </subcellularLocation>
</comment>
<comment type="similarity">
    <text evidence="1">Belongs to the universal ribosomal protein uS19 family.</text>
</comment>
<accession>Q9MTI5</accession>
<organism>
    <name type="scientific">Oenothera elata subsp. hookeri</name>
    <name type="common">Hooker's evening primrose</name>
    <name type="synonym">Oenothera hookeri</name>
    <dbReference type="NCBI Taxonomy" id="85636"/>
    <lineage>
        <taxon>Eukaryota</taxon>
        <taxon>Viridiplantae</taxon>
        <taxon>Streptophyta</taxon>
        <taxon>Embryophyta</taxon>
        <taxon>Tracheophyta</taxon>
        <taxon>Spermatophyta</taxon>
        <taxon>Magnoliopsida</taxon>
        <taxon>eudicotyledons</taxon>
        <taxon>Gunneridae</taxon>
        <taxon>Pentapetalae</taxon>
        <taxon>rosids</taxon>
        <taxon>malvids</taxon>
        <taxon>Myrtales</taxon>
        <taxon>Onagraceae</taxon>
        <taxon>Onagroideae</taxon>
        <taxon>Onagreae</taxon>
        <taxon>Oenothera</taxon>
    </lineage>
</organism>
<proteinExistence type="inferred from homology"/>
<keyword id="KW-0150">Chloroplast</keyword>
<keyword id="KW-0934">Plastid</keyword>
<keyword id="KW-0687">Ribonucleoprotein</keyword>
<keyword id="KW-0689">Ribosomal protein</keyword>
<keyword id="KW-0694">RNA-binding</keyword>
<keyword id="KW-0699">rRNA-binding</keyword>
<gene>
    <name evidence="1" type="primary">rps19</name>
</gene>
<name>RR19_OENEH</name>
<dbReference type="EMBL" id="AJ271079">
    <property type="protein sequence ID" value="CAB67200.2"/>
    <property type="molecule type" value="Genomic_DNA"/>
</dbReference>
<dbReference type="RefSeq" id="NP_084733.2">
    <property type="nucleotide sequence ID" value="NC_002693.2"/>
</dbReference>
<dbReference type="SMR" id="Q9MTI5"/>
<dbReference type="GeneID" id="802801"/>
<dbReference type="GO" id="GO:0009507">
    <property type="term" value="C:chloroplast"/>
    <property type="evidence" value="ECO:0007669"/>
    <property type="project" value="UniProtKB-SubCell"/>
</dbReference>
<dbReference type="GO" id="GO:0005763">
    <property type="term" value="C:mitochondrial small ribosomal subunit"/>
    <property type="evidence" value="ECO:0007669"/>
    <property type="project" value="TreeGrafter"/>
</dbReference>
<dbReference type="GO" id="GO:0019843">
    <property type="term" value="F:rRNA binding"/>
    <property type="evidence" value="ECO:0007669"/>
    <property type="project" value="UniProtKB-UniRule"/>
</dbReference>
<dbReference type="GO" id="GO:0003735">
    <property type="term" value="F:structural constituent of ribosome"/>
    <property type="evidence" value="ECO:0007669"/>
    <property type="project" value="InterPro"/>
</dbReference>
<dbReference type="GO" id="GO:0000028">
    <property type="term" value="P:ribosomal small subunit assembly"/>
    <property type="evidence" value="ECO:0007669"/>
    <property type="project" value="TreeGrafter"/>
</dbReference>
<dbReference type="GO" id="GO:0006412">
    <property type="term" value="P:translation"/>
    <property type="evidence" value="ECO:0007669"/>
    <property type="project" value="UniProtKB-UniRule"/>
</dbReference>
<dbReference type="FunFam" id="3.30.860.10:FF:000001">
    <property type="entry name" value="30S ribosomal protein S19"/>
    <property type="match status" value="1"/>
</dbReference>
<dbReference type="Gene3D" id="3.30.860.10">
    <property type="entry name" value="30s Ribosomal Protein S19, Chain A"/>
    <property type="match status" value="1"/>
</dbReference>
<dbReference type="HAMAP" id="MF_00531">
    <property type="entry name" value="Ribosomal_uS19"/>
    <property type="match status" value="1"/>
</dbReference>
<dbReference type="InterPro" id="IPR002222">
    <property type="entry name" value="Ribosomal_uS19"/>
</dbReference>
<dbReference type="InterPro" id="IPR005732">
    <property type="entry name" value="Ribosomal_uS19_bac-type"/>
</dbReference>
<dbReference type="InterPro" id="IPR020934">
    <property type="entry name" value="Ribosomal_uS19_CS"/>
</dbReference>
<dbReference type="InterPro" id="IPR023575">
    <property type="entry name" value="Ribosomal_uS19_SF"/>
</dbReference>
<dbReference type="NCBIfam" id="TIGR01050">
    <property type="entry name" value="rpsS_bact"/>
    <property type="match status" value="1"/>
</dbReference>
<dbReference type="PANTHER" id="PTHR11880">
    <property type="entry name" value="RIBOSOMAL PROTEIN S19P FAMILY MEMBER"/>
    <property type="match status" value="1"/>
</dbReference>
<dbReference type="PANTHER" id="PTHR11880:SF8">
    <property type="entry name" value="SMALL RIBOSOMAL SUBUNIT PROTEIN US19M"/>
    <property type="match status" value="1"/>
</dbReference>
<dbReference type="Pfam" id="PF00203">
    <property type="entry name" value="Ribosomal_S19"/>
    <property type="match status" value="1"/>
</dbReference>
<dbReference type="PIRSF" id="PIRSF002144">
    <property type="entry name" value="Ribosomal_S19"/>
    <property type="match status" value="1"/>
</dbReference>
<dbReference type="PRINTS" id="PR00975">
    <property type="entry name" value="RIBOSOMALS19"/>
</dbReference>
<dbReference type="SUPFAM" id="SSF54570">
    <property type="entry name" value="Ribosomal protein S19"/>
    <property type="match status" value="1"/>
</dbReference>
<dbReference type="PROSITE" id="PS00323">
    <property type="entry name" value="RIBOSOMAL_S19"/>
    <property type="match status" value="1"/>
</dbReference>
<reference key="1">
    <citation type="journal article" date="2000" name="Mol. Gen. Genet.">
        <title>Complete nucleotide sequence of the Oenothera elata plastid chromosome, representing plastome I of the five distinguishable Euoenothera plastomes.</title>
        <authorList>
            <person name="Hupfer H."/>
            <person name="Swiatek M."/>
            <person name="Hornung S."/>
            <person name="Herrmann R.G."/>
            <person name="Maier R.M."/>
            <person name="Chiu W.-L."/>
            <person name="Sears B."/>
        </authorList>
    </citation>
    <scope>NUCLEOTIDE SEQUENCE [LARGE SCALE GENOMIC DNA]</scope>
    <source>
        <strain>cv. Johansen</strain>
    </source>
</reference>
<reference key="2">
    <citation type="journal article" date="2008" name="Nucleic Acids Res.">
        <title>The complete nucleotide sequences of the five genetically distinct plastid genomes of Oenothera, subsection Oenothera: I. Sequence evaluation and plastome evolution.</title>
        <authorList>
            <person name="Greiner S."/>
            <person name="Wang X."/>
            <person name="Rauwolf U."/>
            <person name="Silber M.V."/>
            <person name="Mayer K."/>
            <person name="Meurer J."/>
            <person name="Haberer G."/>
            <person name="Herrmann R.G."/>
        </authorList>
    </citation>
    <scope>SEQUENCE REVISION TO 58</scope>
</reference>
<protein>
    <recommendedName>
        <fullName evidence="1">Small ribosomal subunit protein uS19c</fullName>
    </recommendedName>
    <alternativeName>
        <fullName evidence="2">30S ribosomal protein S19, chloroplastic</fullName>
    </alternativeName>
</protein>
<sequence length="99" mass="11683">MKRSLKNNPFVANPLLRKMEKLNRREDKILIRTWSRASTIILTMIGHTIAIHNGKEHLPIYITDYMVGHKLGEFAPTINFHEHAKNDNKSRRSKMRIDY</sequence>
<feature type="chain" id="PRO_0000129975" description="Small ribosomal subunit protein uS19c">
    <location>
        <begin position="1"/>
        <end position="99"/>
    </location>
</feature>